<keyword id="KW-0963">Cytoplasm</keyword>
<keyword id="KW-0413">Isomerase</keyword>
<keyword id="KW-0460">Magnesium</keyword>
<keyword id="KW-0479">Metal-binding</keyword>
<keyword id="KW-1185">Reference proteome</keyword>
<protein>
    <recommendedName>
        <fullName evidence="6">Phosphomannomutase</fullName>
        <ecNumber evidence="5">5.4.2.8</ecNumber>
    </recommendedName>
</protein>
<sequence>MSHIRRMPKRTDTLALFDVDGTLTPSRCKASHETLEFLRRLRDEVFTGIVGGSDLVKQEEQLGPTILEDFDYVFSENGLVAYEKGKLIHVQSLAKHLGEEKLKNVINCCLRYIADLDIPLKRGTFVEFRKGMLNVSPIGRNCSQQEREEFEKYDRVHSIRSRFVDYLKERFEGYDLQFSIGGQISFDVFPRGWDKTYCLSFVKHIPVIHFFGDKTFLGGNDYEIFQDARTIGHSVTSPEDTVKQCQQLFNL</sequence>
<comment type="function">
    <text evidence="5 7">Catalyzes the interconversion of mannose-6-phosphate to mannose-1-phosphate, the precursor for the synthesis of GDP-mannose (PubMed:9003801). GDP-mannose is an essential sugar nucleotide for the synthesis of D-mannose-containing cell wall polysaccharides (galactomannans and glucomannans), glycolipids, glycoproteins and the antioxidant L-ascorbate (Probable).</text>
</comment>
<comment type="catalytic activity">
    <reaction evidence="5">
        <text>alpha-D-mannose 1-phosphate = D-mannose 6-phosphate</text>
        <dbReference type="Rhea" id="RHEA:11140"/>
        <dbReference type="ChEBI" id="CHEBI:58409"/>
        <dbReference type="ChEBI" id="CHEBI:58735"/>
        <dbReference type="EC" id="5.4.2.8"/>
    </reaction>
</comment>
<comment type="cofactor">
    <cofactor evidence="3">
        <name>Mg(2+)</name>
        <dbReference type="ChEBI" id="CHEBI:18420"/>
    </cofactor>
</comment>
<comment type="biophysicochemical properties">
    <kinetics>
        <KM evidence="4">3 uM for glucose-1-phosphate</KM>
        <KM evidence="4">4 uM for mannose-1-phosphate</KM>
        <text evidence="5">Glucose-1,6-bisphosphate or mannose-1,6-biphosphate are essential for activity.</text>
    </kinetics>
</comment>
<comment type="pathway">
    <text evidence="5 7">Nucleotide-sugar biosynthesis; GDP-alpha-D-mannose biosynthesis; alpha-D-mannose 1-phosphate from D-fructose 6-phosphate: step 2/2.</text>
</comment>
<comment type="subunit">
    <text evidence="3">Homodimer.</text>
</comment>
<comment type="subcellular location">
    <subcellularLocation>
        <location evidence="1">Cytoplasm</location>
    </subcellularLocation>
</comment>
<comment type="similarity">
    <text evidence="5">Belongs to the eukaryotic PMM family.</text>
</comment>
<organism>
    <name type="scientific">Galdieria sulphuraria</name>
    <name type="common">Red alga</name>
    <dbReference type="NCBI Taxonomy" id="130081"/>
    <lineage>
        <taxon>Eukaryota</taxon>
        <taxon>Rhodophyta</taxon>
        <taxon>Bangiophyceae</taxon>
        <taxon>Galdieriales</taxon>
        <taxon>Galdieriaceae</taxon>
        <taxon>Galdieria</taxon>
    </lineage>
</organism>
<proteinExistence type="evidence at protein level"/>
<evidence type="ECO:0000250" key="1">
    <source>
        <dbReference type="UniProtKB" id="A0A0U1WZ18"/>
    </source>
</evidence>
<evidence type="ECO:0000250" key="2">
    <source>
        <dbReference type="UniProtKB" id="P31353"/>
    </source>
</evidence>
<evidence type="ECO:0000250" key="3">
    <source>
        <dbReference type="UniProtKB" id="Q92871"/>
    </source>
</evidence>
<evidence type="ECO:0000269" key="4">
    <source>
    </source>
</evidence>
<evidence type="ECO:0000269" key="5">
    <source>
    </source>
</evidence>
<evidence type="ECO:0000303" key="6">
    <source>
    </source>
</evidence>
<evidence type="ECO:0000305" key="7"/>
<evidence type="ECO:0000312" key="8">
    <source>
        <dbReference type="EMBL" id="EME27641.1"/>
    </source>
</evidence>
<feature type="chain" id="PRO_0000451445" description="Phosphomannomutase">
    <location>
        <begin position="1"/>
        <end position="251"/>
    </location>
</feature>
<feature type="active site" description="Nucleophile" evidence="3">
    <location>
        <position position="18"/>
    </location>
</feature>
<feature type="active site" description="Proton donor/acceptor" evidence="3">
    <location>
        <position position="20"/>
    </location>
</feature>
<feature type="binding site" evidence="3">
    <location>
        <position position="18"/>
    </location>
    <ligand>
        <name>Mg(2+)</name>
        <dbReference type="ChEBI" id="CHEBI:18420"/>
        <label>1</label>
    </ligand>
</feature>
<feature type="binding site" evidence="3">
    <location>
        <position position="20"/>
    </location>
    <ligand>
        <name>Mg(2+)</name>
        <dbReference type="ChEBI" id="CHEBI:18420"/>
        <label>1</label>
    </ligand>
</feature>
<feature type="binding site" evidence="3">
    <location>
        <position position="27"/>
    </location>
    <ligand>
        <name>alpha-D-mannose 1-phosphate</name>
        <dbReference type="ChEBI" id="CHEBI:58409"/>
    </ligand>
</feature>
<feature type="binding site" evidence="3">
    <location>
        <position position="129"/>
    </location>
    <ligand>
        <name>alpha-D-mannose 1-phosphate</name>
        <dbReference type="ChEBI" id="CHEBI:58409"/>
    </ligand>
</feature>
<feature type="binding site" evidence="3">
    <location>
        <position position="140"/>
    </location>
    <ligand>
        <name>alpha-D-mannose 1-phosphate</name>
        <dbReference type="ChEBI" id="CHEBI:58409"/>
    </ligand>
</feature>
<feature type="binding site" evidence="3">
    <location>
        <position position="147"/>
    </location>
    <ligand>
        <name>alpha-D-mannose 1-phosphate</name>
        <dbReference type="ChEBI" id="CHEBI:58409"/>
    </ligand>
</feature>
<feature type="binding site" evidence="3">
    <location>
        <position position="185"/>
    </location>
    <ligand>
        <name>alpha-D-mannose 1-phosphate</name>
        <dbReference type="ChEBI" id="CHEBI:58409"/>
    </ligand>
</feature>
<feature type="binding site" evidence="3">
    <location>
        <position position="187"/>
    </location>
    <ligand>
        <name>alpha-D-mannose 1-phosphate</name>
        <dbReference type="ChEBI" id="CHEBI:58409"/>
    </ligand>
</feature>
<feature type="binding site" evidence="2">
    <location>
        <position position="213"/>
    </location>
    <ligand>
        <name>Mg(2+)</name>
        <dbReference type="ChEBI" id="CHEBI:18420"/>
        <label>1</label>
    </ligand>
</feature>
<feature type="binding site" evidence="3">
    <location>
        <position position="225"/>
    </location>
    <ligand>
        <name>Mg(2+)</name>
        <dbReference type="ChEBI" id="CHEBI:18420"/>
        <label>2</label>
    </ligand>
</feature>
<feature type="binding site" evidence="3">
    <location>
        <position position="227"/>
    </location>
    <ligand>
        <name>Mg(2+)</name>
        <dbReference type="ChEBI" id="CHEBI:18420"/>
        <label>2</label>
    </ligand>
</feature>
<feature type="binding site" evidence="3">
    <location>
        <position position="230"/>
    </location>
    <ligand>
        <name>Mg(2+)</name>
        <dbReference type="ChEBI" id="CHEBI:18420"/>
        <label>2</label>
    </ligand>
</feature>
<name>PMM_GALSU</name>
<reference key="1">
    <citation type="journal article" date="2013" name="Science">
        <title>Gene transfer from bacteria and archaea facilitated evolution of an extremophilic eukaryote.</title>
        <authorList>
            <person name="Schonknecht G."/>
            <person name="Chen W.H."/>
            <person name="Ternes C.M."/>
            <person name="Barbier G.G."/>
            <person name="Shrestha R.P."/>
            <person name="Stanke M."/>
            <person name="Brautigam A."/>
            <person name="Baker B.J."/>
            <person name="Banfield J.F."/>
            <person name="Garavito R.M."/>
            <person name="Carr K."/>
            <person name="Wilkerson C."/>
            <person name="Rensing S.A."/>
            <person name="Gagneul D."/>
            <person name="Dickenson N.E."/>
            <person name="Oesterhelt C."/>
            <person name="Lercher M.J."/>
            <person name="Weber A.P."/>
        </authorList>
    </citation>
    <scope>NUCLEOTIDE SEQUENCE [LARGE SCALE GENOMIC DNA]</scope>
    <source>
        <strain>074W</strain>
    </source>
</reference>
<reference key="2">
    <citation type="journal article" date="1997" name="FEBS Lett.">
        <title>The reaction mechanism of phosphomannomutase in plants.</title>
        <authorList>
            <person name="Oesterhelt C."/>
            <person name="Schnarrenberger C."/>
            <person name="Gross W."/>
        </authorList>
    </citation>
    <scope>FUNCTION</scope>
    <scope>CATALYTIC ACTIVITY</scope>
    <scope>COFACTOR</scope>
    <scope>BIOPHYSICOCHEMICAL PROPERTIES</scope>
</reference>
<accession>M2VWL5</accession>
<gene>
    <name evidence="7" type="primary">PMM</name>
    <name evidence="8" type="ORF">Gasu_47860</name>
</gene>
<dbReference type="EC" id="5.4.2.8" evidence="5"/>
<dbReference type="EMBL" id="KB454529">
    <property type="protein sequence ID" value="EME27641.1"/>
    <property type="molecule type" value="Genomic_DNA"/>
</dbReference>
<dbReference type="RefSeq" id="XP_005704161.1">
    <property type="nucleotide sequence ID" value="XM_005704104.1"/>
</dbReference>
<dbReference type="SMR" id="M2VWL5"/>
<dbReference type="STRING" id="130081.M2VWL5"/>
<dbReference type="EnsemblPlants" id="EME27641">
    <property type="protein sequence ID" value="EME27641"/>
    <property type="gene ID" value="Gasu_47860"/>
</dbReference>
<dbReference type="GeneID" id="17086531"/>
<dbReference type="Gramene" id="EME27641">
    <property type="protein sequence ID" value="EME27641"/>
    <property type="gene ID" value="Gasu_47860"/>
</dbReference>
<dbReference type="KEGG" id="gsl:Gasu_47860"/>
<dbReference type="eggNOG" id="KOG3189">
    <property type="taxonomic scope" value="Eukaryota"/>
</dbReference>
<dbReference type="OMA" id="ISHRVYT"/>
<dbReference type="OrthoDB" id="10264771at2759"/>
<dbReference type="UniPathway" id="UPA00126">
    <property type="reaction ID" value="UER00424"/>
</dbReference>
<dbReference type="Proteomes" id="UP000030680">
    <property type="component" value="Unassembled WGS sequence"/>
</dbReference>
<dbReference type="GO" id="GO:0005829">
    <property type="term" value="C:cytosol"/>
    <property type="evidence" value="ECO:0007669"/>
    <property type="project" value="TreeGrafter"/>
</dbReference>
<dbReference type="GO" id="GO:0046872">
    <property type="term" value="F:metal ion binding"/>
    <property type="evidence" value="ECO:0007669"/>
    <property type="project" value="UniProtKB-KW"/>
</dbReference>
<dbReference type="GO" id="GO:0004615">
    <property type="term" value="F:phosphomannomutase activity"/>
    <property type="evidence" value="ECO:0000314"/>
    <property type="project" value="UniProtKB"/>
</dbReference>
<dbReference type="GO" id="GO:0009298">
    <property type="term" value="P:GDP-mannose biosynthetic process"/>
    <property type="evidence" value="ECO:0000314"/>
    <property type="project" value="UniProtKB"/>
</dbReference>
<dbReference type="GO" id="GO:0006013">
    <property type="term" value="P:mannose metabolic process"/>
    <property type="evidence" value="ECO:0007669"/>
    <property type="project" value="TreeGrafter"/>
</dbReference>
<dbReference type="GO" id="GO:0006487">
    <property type="term" value="P:protein N-linked glycosylation"/>
    <property type="evidence" value="ECO:0007669"/>
    <property type="project" value="TreeGrafter"/>
</dbReference>
<dbReference type="CDD" id="cd02585">
    <property type="entry name" value="HAD_PMM"/>
    <property type="match status" value="1"/>
</dbReference>
<dbReference type="FunFam" id="3.30.1240.20:FF:000001">
    <property type="entry name" value="Phosphomannomutase"/>
    <property type="match status" value="1"/>
</dbReference>
<dbReference type="Gene3D" id="3.30.1240.20">
    <property type="match status" value="1"/>
</dbReference>
<dbReference type="Gene3D" id="3.40.50.1000">
    <property type="entry name" value="HAD superfamily/HAD-like"/>
    <property type="match status" value="1"/>
</dbReference>
<dbReference type="InterPro" id="IPR036412">
    <property type="entry name" value="HAD-like_sf"/>
</dbReference>
<dbReference type="InterPro" id="IPR006379">
    <property type="entry name" value="HAD-SF_hydro_IIB"/>
</dbReference>
<dbReference type="InterPro" id="IPR023214">
    <property type="entry name" value="HAD_sf"/>
</dbReference>
<dbReference type="InterPro" id="IPR005002">
    <property type="entry name" value="PMM"/>
</dbReference>
<dbReference type="InterPro" id="IPR043169">
    <property type="entry name" value="PMM_cap"/>
</dbReference>
<dbReference type="NCBIfam" id="TIGR01484">
    <property type="entry name" value="HAD-SF-IIB"/>
    <property type="match status" value="1"/>
</dbReference>
<dbReference type="PANTHER" id="PTHR10466">
    <property type="entry name" value="PHOSPHOMANNOMUTASE"/>
    <property type="match status" value="1"/>
</dbReference>
<dbReference type="PANTHER" id="PTHR10466:SF0">
    <property type="entry name" value="PHOSPHOMANNOMUTASE"/>
    <property type="match status" value="1"/>
</dbReference>
<dbReference type="Pfam" id="PF03332">
    <property type="entry name" value="PMM"/>
    <property type="match status" value="1"/>
</dbReference>
<dbReference type="SFLD" id="SFLDF00445">
    <property type="entry name" value="alpha-phosphomannomutase"/>
    <property type="match status" value="1"/>
</dbReference>
<dbReference type="SFLD" id="SFLDG01143">
    <property type="entry name" value="C2.B.3:_Phosphomannomutase_Lik"/>
    <property type="match status" value="1"/>
</dbReference>
<dbReference type="SUPFAM" id="SSF56784">
    <property type="entry name" value="HAD-like"/>
    <property type="match status" value="1"/>
</dbReference>